<feature type="chain" id="PRO_0000254849" description="Cytochrome b">
    <location>
        <begin position="1"/>
        <end position="379"/>
    </location>
</feature>
<feature type="transmembrane region" description="Helical" evidence="2">
    <location>
        <begin position="33"/>
        <end position="53"/>
    </location>
</feature>
<feature type="transmembrane region" description="Helical" evidence="2">
    <location>
        <begin position="77"/>
        <end position="98"/>
    </location>
</feature>
<feature type="transmembrane region" description="Helical" evidence="2">
    <location>
        <begin position="113"/>
        <end position="133"/>
    </location>
</feature>
<feature type="transmembrane region" description="Helical" evidence="2">
    <location>
        <begin position="178"/>
        <end position="198"/>
    </location>
</feature>
<feature type="transmembrane region" description="Helical" evidence="2">
    <location>
        <begin position="226"/>
        <end position="246"/>
    </location>
</feature>
<feature type="transmembrane region" description="Helical" evidence="2">
    <location>
        <begin position="288"/>
        <end position="308"/>
    </location>
</feature>
<feature type="transmembrane region" description="Helical" evidence="2">
    <location>
        <begin position="320"/>
        <end position="340"/>
    </location>
</feature>
<feature type="transmembrane region" description="Helical" evidence="2">
    <location>
        <begin position="347"/>
        <end position="367"/>
    </location>
</feature>
<feature type="binding site" description="axial binding residue" evidence="2">
    <location>
        <position position="83"/>
    </location>
    <ligand>
        <name>heme b</name>
        <dbReference type="ChEBI" id="CHEBI:60344"/>
        <label>b562</label>
    </ligand>
    <ligandPart>
        <name>Fe</name>
        <dbReference type="ChEBI" id="CHEBI:18248"/>
    </ligandPart>
</feature>
<feature type="binding site" description="axial binding residue" evidence="2">
    <location>
        <position position="97"/>
    </location>
    <ligand>
        <name>heme b</name>
        <dbReference type="ChEBI" id="CHEBI:60344"/>
        <label>b566</label>
    </ligand>
    <ligandPart>
        <name>Fe</name>
        <dbReference type="ChEBI" id="CHEBI:18248"/>
    </ligandPart>
</feature>
<feature type="binding site" description="axial binding residue" evidence="2">
    <location>
        <position position="182"/>
    </location>
    <ligand>
        <name>heme b</name>
        <dbReference type="ChEBI" id="CHEBI:60344"/>
        <label>b562</label>
    </ligand>
    <ligandPart>
        <name>Fe</name>
        <dbReference type="ChEBI" id="CHEBI:18248"/>
    </ligandPart>
</feature>
<feature type="binding site" description="axial binding residue" evidence="2">
    <location>
        <position position="196"/>
    </location>
    <ligand>
        <name>heme b</name>
        <dbReference type="ChEBI" id="CHEBI:60344"/>
        <label>b566</label>
    </ligand>
    <ligandPart>
        <name>Fe</name>
        <dbReference type="ChEBI" id="CHEBI:18248"/>
    </ligandPart>
</feature>
<feature type="binding site" evidence="2">
    <location>
        <position position="201"/>
    </location>
    <ligand>
        <name>a ubiquinone</name>
        <dbReference type="ChEBI" id="CHEBI:16389"/>
    </ligand>
</feature>
<dbReference type="EMBL" id="AY928679">
    <property type="protein sequence ID" value="AAY18248.1"/>
    <property type="molecule type" value="Genomic_DNA"/>
</dbReference>
<dbReference type="SMR" id="Q3ZEC1"/>
<dbReference type="GO" id="GO:0005743">
    <property type="term" value="C:mitochondrial inner membrane"/>
    <property type="evidence" value="ECO:0007669"/>
    <property type="project" value="UniProtKB-SubCell"/>
</dbReference>
<dbReference type="GO" id="GO:0045275">
    <property type="term" value="C:respiratory chain complex III"/>
    <property type="evidence" value="ECO:0007669"/>
    <property type="project" value="InterPro"/>
</dbReference>
<dbReference type="GO" id="GO:0046872">
    <property type="term" value="F:metal ion binding"/>
    <property type="evidence" value="ECO:0007669"/>
    <property type="project" value="UniProtKB-KW"/>
</dbReference>
<dbReference type="GO" id="GO:0008121">
    <property type="term" value="F:ubiquinol-cytochrome-c reductase activity"/>
    <property type="evidence" value="ECO:0007669"/>
    <property type="project" value="InterPro"/>
</dbReference>
<dbReference type="GO" id="GO:0006122">
    <property type="term" value="P:mitochondrial electron transport, ubiquinol to cytochrome c"/>
    <property type="evidence" value="ECO:0007669"/>
    <property type="project" value="TreeGrafter"/>
</dbReference>
<dbReference type="CDD" id="cd00290">
    <property type="entry name" value="cytochrome_b_C"/>
    <property type="match status" value="1"/>
</dbReference>
<dbReference type="CDD" id="cd00284">
    <property type="entry name" value="Cytochrome_b_N"/>
    <property type="match status" value="1"/>
</dbReference>
<dbReference type="FunFam" id="1.20.810.10:FF:000002">
    <property type="entry name" value="Cytochrome b"/>
    <property type="match status" value="1"/>
</dbReference>
<dbReference type="Gene3D" id="1.20.810.10">
    <property type="entry name" value="Cytochrome Bc1 Complex, Chain C"/>
    <property type="match status" value="1"/>
</dbReference>
<dbReference type="InterPro" id="IPR005798">
    <property type="entry name" value="Cyt_b/b6_C"/>
</dbReference>
<dbReference type="InterPro" id="IPR036150">
    <property type="entry name" value="Cyt_b/b6_C_sf"/>
</dbReference>
<dbReference type="InterPro" id="IPR005797">
    <property type="entry name" value="Cyt_b/b6_N"/>
</dbReference>
<dbReference type="InterPro" id="IPR027387">
    <property type="entry name" value="Cytb/b6-like_sf"/>
</dbReference>
<dbReference type="InterPro" id="IPR030689">
    <property type="entry name" value="Cytochrome_b"/>
</dbReference>
<dbReference type="InterPro" id="IPR048260">
    <property type="entry name" value="Cytochrome_b_C_euk/bac"/>
</dbReference>
<dbReference type="InterPro" id="IPR048259">
    <property type="entry name" value="Cytochrome_b_N_euk/bac"/>
</dbReference>
<dbReference type="InterPro" id="IPR016174">
    <property type="entry name" value="Di-haem_cyt_TM"/>
</dbReference>
<dbReference type="PANTHER" id="PTHR19271">
    <property type="entry name" value="CYTOCHROME B"/>
    <property type="match status" value="1"/>
</dbReference>
<dbReference type="PANTHER" id="PTHR19271:SF16">
    <property type="entry name" value="CYTOCHROME B"/>
    <property type="match status" value="1"/>
</dbReference>
<dbReference type="Pfam" id="PF00032">
    <property type="entry name" value="Cytochrom_B_C"/>
    <property type="match status" value="1"/>
</dbReference>
<dbReference type="Pfam" id="PF00033">
    <property type="entry name" value="Cytochrome_B"/>
    <property type="match status" value="1"/>
</dbReference>
<dbReference type="PIRSF" id="PIRSF038885">
    <property type="entry name" value="COB"/>
    <property type="match status" value="1"/>
</dbReference>
<dbReference type="SUPFAM" id="SSF81648">
    <property type="entry name" value="a domain/subunit of cytochrome bc1 complex (Ubiquinol-cytochrome c reductase)"/>
    <property type="match status" value="1"/>
</dbReference>
<dbReference type="SUPFAM" id="SSF81342">
    <property type="entry name" value="Transmembrane di-heme cytochromes"/>
    <property type="match status" value="1"/>
</dbReference>
<dbReference type="PROSITE" id="PS51003">
    <property type="entry name" value="CYTB_CTER"/>
    <property type="match status" value="1"/>
</dbReference>
<dbReference type="PROSITE" id="PS51002">
    <property type="entry name" value="CYTB_NTER"/>
    <property type="match status" value="1"/>
</dbReference>
<name>CYB_PROCR</name>
<gene>
    <name type="primary">MT-CYB</name>
    <name type="synonym">COB</name>
    <name type="synonym">CYTB</name>
    <name type="synonym">MTCYB</name>
</gene>
<sequence length="379" mass="42514">MTNIRKSHPLIKIVNKSFIDLPTPPNISAWWNFGSLLGICLILQVLTGLFLAMHYTSDTMTAFSSVTHICRDVNYGWVIRYMHANGASMFFICLFMHIGRGMYYGSYAFPETWNIGILLLFAVMATAFMGYVLPWGQMSFWGATVITNLLSAIPYIGTSLVEWIWGGFSVNKATLTRFFAFHFILPFIILALATIHLLFLHETGSNNPSGMTSDADKVPFHPYYTIKDILGLLLLVLALSTLVLFSPDLLGDPDNYTPANPLNTPPHIKPEWYFLFAYAILRSIPNKLGGVLALIMSILILAIVPLLHTSKQRGMAFRPISQCLFWLLVADLLTLTWIGGQPVEYPFITIGQLASIAYFSIILILMPVSGIIENYLLKW</sequence>
<keyword id="KW-0249">Electron transport</keyword>
<keyword id="KW-0349">Heme</keyword>
<keyword id="KW-0408">Iron</keyword>
<keyword id="KW-0472">Membrane</keyword>
<keyword id="KW-0479">Metal-binding</keyword>
<keyword id="KW-0496">Mitochondrion</keyword>
<keyword id="KW-0999">Mitochondrion inner membrane</keyword>
<keyword id="KW-0679">Respiratory chain</keyword>
<keyword id="KW-0812">Transmembrane</keyword>
<keyword id="KW-1133">Transmembrane helix</keyword>
<keyword id="KW-0813">Transport</keyword>
<keyword id="KW-0830">Ubiquinone</keyword>
<evidence type="ECO:0000250" key="1"/>
<evidence type="ECO:0000250" key="2">
    <source>
        <dbReference type="UniProtKB" id="P00157"/>
    </source>
</evidence>
<evidence type="ECO:0000255" key="3">
    <source>
        <dbReference type="PROSITE-ProRule" id="PRU00967"/>
    </source>
</evidence>
<evidence type="ECO:0000255" key="4">
    <source>
        <dbReference type="PROSITE-ProRule" id="PRU00968"/>
    </source>
</evidence>
<comment type="function">
    <text evidence="2">Component of the ubiquinol-cytochrome c reductase complex (complex III or cytochrome b-c1 complex) that is part of the mitochondrial respiratory chain. The b-c1 complex mediates electron transfer from ubiquinol to cytochrome c. Contributes to the generation of a proton gradient across the mitochondrial membrane that is then used for ATP synthesis.</text>
</comment>
<comment type="cofactor">
    <cofactor evidence="2">
        <name>heme b</name>
        <dbReference type="ChEBI" id="CHEBI:60344"/>
    </cofactor>
    <text evidence="2">Binds 2 heme b groups non-covalently.</text>
</comment>
<comment type="subunit">
    <text evidence="2">The cytochrome bc1 complex contains 11 subunits: 3 respiratory subunits (MT-CYB, CYC1 and UQCRFS1), 2 core proteins (UQCRC1 and UQCRC2) and 6 low-molecular weight proteins (UQCRH/QCR6, UQCRB/QCR7, UQCRQ/QCR8, UQCR10/QCR9, UQCR11/QCR10 and a cleavage product of UQCRFS1). This cytochrome bc1 complex then forms a dimer.</text>
</comment>
<comment type="subcellular location">
    <subcellularLocation>
        <location evidence="2">Mitochondrion inner membrane</location>
        <topology evidence="2">Multi-pass membrane protein</topology>
    </subcellularLocation>
</comment>
<comment type="miscellaneous">
    <text evidence="1">Heme 1 (or BL or b562) is low-potential and absorbs at about 562 nm, and heme 2 (or BH or b566) is high-potential and absorbs at about 566 nm.</text>
</comment>
<comment type="similarity">
    <text evidence="3 4">Belongs to the cytochrome b family.</text>
</comment>
<comment type="caution">
    <text evidence="2">The full-length protein contains only eight transmembrane helices, not nine as predicted by bioinformatics tools.</text>
</comment>
<protein>
    <recommendedName>
        <fullName>Cytochrome b</fullName>
    </recommendedName>
    <alternativeName>
        <fullName>Complex III subunit 3</fullName>
    </alternativeName>
    <alternativeName>
        <fullName>Complex III subunit III</fullName>
    </alternativeName>
    <alternativeName>
        <fullName>Cytochrome b-c1 complex subunit 3</fullName>
    </alternativeName>
    <alternativeName>
        <fullName>Ubiquinol-cytochrome-c reductase complex cytochrome b subunit</fullName>
    </alternativeName>
</protein>
<reference key="1">
    <citation type="journal article" date="2006" name="Mol. Phylogenet. Evol.">
        <title>Molecular systematics of the Hyaenidae: relationships of a relictual lineage resolved by a molecular supermatrix.</title>
        <authorList>
            <person name="Koepfli K.-P."/>
            <person name="Jenks S.M."/>
            <person name="Eizirik E."/>
            <person name="Zahirpour T."/>
            <person name="Van Valkenburgh B."/>
            <person name="Wayne R.K."/>
        </authorList>
    </citation>
    <scope>NUCLEOTIDE SEQUENCE [GENOMIC DNA]</scope>
</reference>
<geneLocation type="mitochondrion"/>
<organism>
    <name type="scientific">Proteles cristata</name>
    <name type="common">Aardwolf</name>
    <dbReference type="NCBI Taxonomy" id="9680"/>
    <lineage>
        <taxon>Eukaryota</taxon>
        <taxon>Metazoa</taxon>
        <taxon>Chordata</taxon>
        <taxon>Craniata</taxon>
        <taxon>Vertebrata</taxon>
        <taxon>Euteleostomi</taxon>
        <taxon>Mammalia</taxon>
        <taxon>Eutheria</taxon>
        <taxon>Laurasiatheria</taxon>
        <taxon>Carnivora</taxon>
        <taxon>Feliformia</taxon>
        <taxon>Hyaenidae</taxon>
        <taxon>Proteles</taxon>
    </lineage>
</organism>
<accession>Q3ZEC1</accession>
<proteinExistence type="inferred from homology"/>